<organism>
    <name type="scientific">Caldivirga maquilingensis (strain ATCC 700844 / DSM 13496 / JCM 10307 / IC-167)</name>
    <dbReference type="NCBI Taxonomy" id="397948"/>
    <lineage>
        <taxon>Archaea</taxon>
        <taxon>Thermoproteota</taxon>
        <taxon>Thermoprotei</taxon>
        <taxon>Thermoproteales</taxon>
        <taxon>Thermoproteaceae</taxon>
        <taxon>Caldivirga</taxon>
    </lineage>
</organism>
<evidence type="ECO:0000255" key="1">
    <source>
        <dbReference type="HAMAP-Rule" id="MF_00648"/>
    </source>
</evidence>
<dbReference type="EC" id="3.6.1.73" evidence="1"/>
<dbReference type="EMBL" id="CP000852">
    <property type="protein sequence ID" value="ABW00974.1"/>
    <property type="molecule type" value="Genomic_DNA"/>
</dbReference>
<dbReference type="RefSeq" id="WP_012185194.1">
    <property type="nucleotide sequence ID" value="NC_009954.1"/>
</dbReference>
<dbReference type="SMR" id="A8MA42"/>
<dbReference type="STRING" id="397948.Cmaq_0122"/>
<dbReference type="GeneID" id="5708528"/>
<dbReference type="KEGG" id="cma:Cmaq_0122"/>
<dbReference type="eggNOG" id="arCOG01221">
    <property type="taxonomic scope" value="Archaea"/>
</dbReference>
<dbReference type="HOGENOM" id="CLU_087417_0_1_2"/>
<dbReference type="OrthoDB" id="52857at2157"/>
<dbReference type="Proteomes" id="UP000001137">
    <property type="component" value="Chromosome"/>
</dbReference>
<dbReference type="GO" id="GO:0103023">
    <property type="term" value="F:ITPase activity"/>
    <property type="evidence" value="ECO:0007669"/>
    <property type="project" value="UniProtKB-EC"/>
</dbReference>
<dbReference type="GO" id="GO:0046872">
    <property type="term" value="F:metal ion binding"/>
    <property type="evidence" value="ECO:0007669"/>
    <property type="project" value="UniProtKB-KW"/>
</dbReference>
<dbReference type="GO" id="GO:0000166">
    <property type="term" value="F:nucleotide binding"/>
    <property type="evidence" value="ECO:0007669"/>
    <property type="project" value="UniProtKB-KW"/>
</dbReference>
<dbReference type="GO" id="GO:0017111">
    <property type="term" value="F:ribonucleoside triphosphate phosphatase activity"/>
    <property type="evidence" value="ECO:0000250"/>
    <property type="project" value="UniProtKB"/>
</dbReference>
<dbReference type="GO" id="GO:0009117">
    <property type="term" value="P:nucleotide metabolic process"/>
    <property type="evidence" value="ECO:0007669"/>
    <property type="project" value="UniProtKB-KW"/>
</dbReference>
<dbReference type="GO" id="GO:0006772">
    <property type="term" value="P:thiamine metabolic process"/>
    <property type="evidence" value="ECO:0007669"/>
    <property type="project" value="TreeGrafter"/>
</dbReference>
<dbReference type="FunFam" id="3.90.950.10:FF:000002">
    <property type="entry name" value="Inosine/xanthosine triphosphatase"/>
    <property type="match status" value="1"/>
</dbReference>
<dbReference type="Gene3D" id="3.90.950.10">
    <property type="match status" value="1"/>
</dbReference>
<dbReference type="HAMAP" id="MF_00648">
    <property type="entry name" value="Non_canon_purine_NTPase_YjjX"/>
    <property type="match status" value="1"/>
</dbReference>
<dbReference type="InterPro" id="IPR029001">
    <property type="entry name" value="ITPase-like_fam"/>
</dbReference>
<dbReference type="InterPro" id="IPR002786">
    <property type="entry name" value="Non_canon_purine_NTPase"/>
</dbReference>
<dbReference type="InterPro" id="IPR026533">
    <property type="entry name" value="NTPase/PRRC1"/>
</dbReference>
<dbReference type="InterPro" id="IPR050299">
    <property type="entry name" value="YjjX_NTPase"/>
</dbReference>
<dbReference type="NCBIfam" id="TIGR00258">
    <property type="entry name" value="inosine/xanthosine triphosphatase"/>
    <property type="match status" value="1"/>
</dbReference>
<dbReference type="PANTHER" id="PTHR34699">
    <property type="match status" value="1"/>
</dbReference>
<dbReference type="PANTHER" id="PTHR34699:SF2">
    <property type="entry name" value="NON-CANONICAL PURINE NTP PHOSPHATASE_PRRC1 DOMAIN-CONTAINING PROTEIN"/>
    <property type="match status" value="1"/>
</dbReference>
<dbReference type="Pfam" id="PF01931">
    <property type="entry name" value="NTPase_I-T"/>
    <property type="match status" value="1"/>
</dbReference>
<dbReference type="SUPFAM" id="SSF52972">
    <property type="entry name" value="ITPase-like"/>
    <property type="match status" value="1"/>
</dbReference>
<comment type="function">
    <text evidence="1">Phosphatase that hydrolyzes non-canonical purine nucleotides such as XTP and ITP to their respective diphosphate derivatives. Probably excludes non-canonical purines from DNA/RNA precursor pool, thus preventing their incorporation into DNA/RNA and avoiding chromosomal lesions.</text>
</comment>
<comment type="catalytic activity">
    <reaction evidence="1">
        <text>XTP + H2O = XDP + phosphate + H(+)</text>
        <dbReference type="Rhea" id="RHEA:28406"/>
        <dbReference type="ChEBI" id="CHEBI:15377"/>
        <dbReference type="ChEBI" id="CHEBI:15378"/>
        <dbReference type="ChEBI" id="CHEBI:43474"/>
        <dbReference type="ChEBI" id="CHEBI:59884"/>
        <dbReference type="ChEBI" id="CHEBI:61314"/>
        <dbReference type="EC" id="3.6.1.73"/>
    </reaction>
</comment>
<comment type="catalytic activity">
    <reaction evidence="1">
        <text>ITP + H2O = IDP + phosphate + H(+)</text>
        <dbReference type="Rhea" id="RHEA:28330"/>
        <dbReference type="ChEBI" id="CHEBI:15377"/>
        <dbReference type="ChEBI" id="CHEBI:15378"/>
        <dbReference type="ChEBI" id="CHEBI:43474"/>
        <dbReference type="ChEBI" id="CHEBI:58280"/>
        <dbReference type="ChEBI" id="CHEBI:61402"/>
        <dbReference type="EC" id="3.6.1.73"/>
    </reaction>
</comment>
<comment type="cofactor">
    <cofactor evidence="1">
        <name>Mg(2+)</name>
        <dbReference type="ChEBI" id="CHEBI:18420"/>
    </cofactor>
    <cofactor evidence="1">
        <name>Mn(2+)</name>
        <dbReference type="ChEBI" id="CHEBI:29035"/>
    </cofactor>
    <text evidence="1">Binds 1 divalent metal cation per subunit; can use either Mg(2+) or Mn(2+).</text>
</comment>
<comment type="subunit">
    <text evidence="1">Homodimer.</text>
</comment>
<comment type="similarity">
    <text evidence="1">Belongs to the YjjX NTPase family.</text>
</comment>
<reference key="1">
    <citation type="submission" date="2007-10" db="EMBL/GenBank/DDBJ databases">
        <title>Complete sequence of Caldivirga maquilingensis IC-167.</title>
        <authorList>
            <consortium name="US DOE Joint Genome Institute"/>
            <person name="Copeland A."/>
            <person name="Lucas S."/>
            <person name="Lapidus A."/>
            <person name="Barry K."/>
            <person name="Glavina del Rio T."/>
            <person name="Dalin E."/>
            <person name="Tice H."/>
            <person name="Pitluck S."/>
            <person name="Saunders E."/>
            <person name="Brettin T."/>
            <person name="Bruce D."/>
            <person name="Detter J.C."/>
            <person name="Han C."/>
            <person name="Schmutz J."/>
            <person name="Larimer F."/>
            <person name="Land M."/>
            <person name="Hauser L."/>
            <person name="Kyrpides N."/>
            <person name="Ivanova N."/>
            <person name="Biddle J.F."/>
            <person name="Zhang Z."/>
            <person name="Fitz-Gibbon S.T."/>
            <person name="Lowe T.M."/>
            <person name="Saltikov C."/>
            <person name="House C.H."/>
            <person name="Richardson P."/>
        </authorList>
    </citation>
    <scope>NUCLEOTIDE SEQUENCE [LARGE SCALE GENOMIC DNA]</scope>
    <source>
        <strain>ATCC 700844 / DSM 13496 / JCM 10307 / IC-167</strain>
    </source>
</reference>
<protein>
    <recommendedName>
        <fullName evidence="1">Probable inosine/xanthosine triphosphatase</fullName>
        <shortName evidence="1">ITPase/XTPase</shortName>
        <ecNumber evidence="1">3.6.1.73</ecNumber>
    </recommendedName>
    <alternativeName>
        <fullName evidence="1">Non-canonical purine NTP phosphatase</fullName>
    </alternativeName>
    <alternativeName>
        <fullName evidence="1">Non-standard purine NTP phosphatase</fullName>
    </alternativeName>
    <alternativeName>
        <fullName evidence="1">Nucleoside-triphosphate phosphatase</fullName>
        <shortName evidence="1">NTPase</shortName>
    </alternativeName>
</protein>
<accession>A8MA42</accession>
<gene>
    <name type="ordered locus">Cmaq_0122</name>
</gene>
<name>NCPP_CALMQ</name>
<keyword id="KW-0378">Hydrolase</keyword>
<keyword id="KW-0460">Magnesium</keyword>
<keyword id="KW-0464">Manganese</keyword>
<keyword id="KW-0479">Metal-binding</keyword>
<keyword id="KW-0546">Nucleotide metabolism</keyword>
<keyword id="KW-0547">Nucleotide-binding</keyword>
<keyword id="KW-1185">Reference proteome</keyword>
<proteinExistence type="inferred from homology"/>
<sequence length="181" mass="19477">MKVALASRNPSKVKAVEEALRILNINGTVEAVDPPPGIPPEPMGLEATVNGAVVRARHALSSIKDSTYGIGIEAGVLMLSAFNVNFDVTVAAVIDRKGLITLGLSPAFMIPPAFMRELMTGKELNDVVEKYYGVPNAGKGIGFIGLLSRGLIKRINLNTEAVYMALLPRMPWNKDLYELSD</sequence>
<feature type="chain" id="PRO_1000082716" description="Probable inosine/xanthosine triphosphatase">
    <location>
        <begin position="1"/>
        <end position="181"/>
    </location>
</feature>
<feature type="binding site" evidence="1">
    <location>
        <position position="65"/>
    </location>
    <ligand>
        <name>Mg(2+)</name>
        <dbReference type="ChEBI" id="CHEBI:18420"/>
    </ligand>
</feature>